<gene>
    <name evidence="1" type="primary">rplC</name>
    <name type="ordered locus">BRADO3066</name>
</gene>
<accession>A4YSJ2</accession>
<sequence length="239" mass="25536">MRSGVIAQKVGMTRVFTETGEHIPVTVLKLGNCQVVGHRTTEKNGYVALQLGSGSRKTVYMPKAERGQFAVAKVEPKRKLAEFRVSEDSLIPVGAEIQADHFVVGQFVDVTGTSVGKGFAGGMKRWNFGGLRATHGVSISHRSIGSTGGRQDPGKTWKNKKMPGHMGVDRITTLNLRVVQTDVERGLILVEGAVPGSKGGWISVRDAVKKPLPKEAPKPGKFKVAGEQAAEAPAMQEGA</sequence>
<proteinExistence type="inferred from homology"/>
<comment type="function">
    <text evidence="1">One of the primary rRNA binding proteins, it binds directly near the 3'-end of the 23S rRNA, where it nucleates assembly of the 50S subunit.</text>
</comment>
<comment type="subunit">
    <text evidence="1">Part of the 50S ribosomal subunit. Forms a cluster with proteins L14 and L19.</text>
</comment>
<comment type="PTM">
    <text evidence="1">Methylated by PrmB.</text>
</comment>
<comment type="similarity">
    <text evidence="1">Belongs to the universal ribosomal protein uL3 family.</text>
</comment>
<protein>
    <recommendedName>
        <fullName evidence="1">Large ribosomal subunit protein uL3</fullName>
    </recommendedName>
    <alternativeName>
        <fullName evidence="3">50S ribosomal protein L3</fullName>
    </alternativeName>
</protein>
<reference key="1">
    <citation type="journal article" date="2007" name="Science">
        <title>Legumes symbioses: absence of nod genes in photosynthetic bradyrhizobia.</title>
        <authorList>
            <person name="Giraud E."/>
            <person name="Moulin L."/>
            <person name="Vallenet D."/>
            <person name="Barbe V."/>
            <person name="Cytryn E."/>
            <person name="Avarre J.-C."/>
            <person name="Jaubert M."/>
            <person name="Simon D."/>
            <person name="Cartieaux F."/>
            <person name="Prin Y."/>
            <person name="Bena G."/>
            <person name="Hannibal L."/>
            <person name="Fardoux J."/>
            <person name="Kojadinovic M."/>
            <person name="Vuillet L."/>
            <person name="Lajus A."/>
            <person name="Cruveiller S."/>
            <person name="Rouy Z."/>
            <person name="Mangenot S."/>
            <person name="Segurens B."/>
            <person name="Dossat C."/>
            <person name="Franck W.L."/>
            <person name="Chang W.-S."/>
            <person name="Saunders E."/>
            <person name="Bruce D."/>
            <person name="Richardson P."/>
            <person name="Normand P."/>
            <person name="Dreyfus B."/>
            <person name="Pignol D."/>
            <person name="Stacey G."/>
            <person name="Emerich D."/>
            <person name="Vermeglio A."/>
            <person name="Medigue C."/>
            <person name="Sadowsky M."/>
        </authorList>
    </citation>
    <scope>NUCLEOTIDE SEQUENCE [LARGE SCALE GENOMIC DNA]</scope>
    <source>
        <strain>ORS 278</strain>
    </source>
</reference>
<evidence type="ECO:0000255" key="1">
    <source>
        <dbReference type="HAMAP-Rule" id="MF_01325"/>
    </source>
</evidence>
<evidence type="ECO:0000256" key="2">
    <source>
        <dbReference type="SAM" id="MobiDB-lite"/>
    </source>
</evidence>
<evidence type="ECO:0000305" key="3"/>
<dbReference type="EMBL" id="CU234118">
    <property type="protein sequence ID" value="CAL76868.1"/>
    <property type="molecule type" value="Genomic_DNA"/>
</dbReference>
<dbReference type="RefSeq" id="WP_011926051.1">
    <property type="nucleotide sequence ID" value="NC_009445.1"/>
</dbReference>
<dbReference type="SMR" id="A4YSJ2"/>
<dbReference type="STRING" id="114615.BRADO3066"/>
<dbReference type="KEGG" id="bra:BRADO3066"/>
<dbReference type="eggNOG" id="COG0087">
    <property type="taxonomic scope" value="Bacteria"/>
</dbReference>
<dbReference type="HOGENOM" id="CLU_044142_2_0_5"/>
<dbReference type="OrthoDB" id="9806135at2"/>
<dbReference type="Proteomes" id="UP000001994">
    <property type="component" value="Chromosome"/>
</dbReference>
<dbReference type="GO" id="GO:0022625">
    <property type="term" value="C:cytosolic large ribosomal subunit"/>
    <property type="evidence" value="ECO:0007669"/>
    <property type="project" value="TreeGrafter"/>
</dbReference>
<dbReference type="GO" id="GO:0019843">
    <property type="term" value="F:rRNA binding"/>
    <property type="evidence" value="ECO:0007669"/>
    <property type="project" value="UniProtKB-UniRule"/>
</dbReference>
<dbReference type="GO" id="GO:0003735">
    <property type="term" value="F:structural constituent of ribosome"/>
    <property type="evidence" value="ECO:0007669"/>
    <property type="project" value="InterPro"/>
</dbReference>
<dbReference type="GO" id="GO:0006412">
    <property type="term" value="P:translation"/>
    <property type="evidence" value="ECO:0007669"/>
    <property type="project" value="UniProtKB-UniRule"/>
</dbReference>
<dbReference type="FunFam" id="2.40.30.10:FF:000004">
    <property type="entry name" value="50S ribosomal protein L3"/>
    <property type="match status" value="1"/>
</dbReference>
<dbReference type="FunFam" id="3.30.160.810:FF:000001">
    <property type="entry name" value="50S ribosomal protein L3"/>
    <property type="match status" value="1"/>
</dbReference>
<dbReference type="Gene3D" id="3.30.160.810">
    <property type="match status" value="1"/>
</dbReference>
<dbReference type="Gene3D" id="2.40.30.10">
    <property type="entry name" value="Translation factors"/>
    <property type="match status" value="1"/>
</dbReference>
<dbReference type="HAMAP" id="MF_01325_B">
    <property type="entry name" value="Ribosomal_uL3_B"/>
    <property type="match status" value="1"/>
</dbReference>
<dbReference type="InterPro" id="IPR000597">
    <property type="entry name" value="Ribosomal_uL3"/>
</dbReference>
<dbReference type="InterPro" id="IPR019927">
    <property type="entry name" value="Ribosomal_uL3_bac/org-type"/>
</dbReference>
<dbReference type="InterPro" id="IPR019926">
    <property type="entry name" value="Ribosomal_uL3_CS"/>
</dbReference>
<dbReference type="InterPro" id="IPR009000">
    <property type="entry name" value="Transl_B-barrel_sf"/>
</dbReference>
<dbReference type="NCBIfam" id="TIGR03625">
    <property type="entry name" value="L3_bact"/>
    <property type="match status" value="1"/>
</dbReference>
<dbReference type="PANTHER" id="PTHR11229">
    <property type="entry name" value="50S RIBOSOMAL PROTEIN L3"/>
    <property type="match status" value="1"/>
</dbReference>
<dbReference type="PANTHER" id="PTHR11229:SF16">
    <property type="entry name" value="LARGE RIBOSOMAL SUBUNIT PROTEIN UL3C"/>
    <property type="match status" value="1"/>
</dbReference>
<dbReference type="Pfam" id="PF00297">
    <property type="entry name" value="Ribosomal_L3"/>
    <property type="match status" value="1"/>
</dbReference>
<dbReference type="SUPFAM" id="SSF50447">
    <property type="entry name" value="Translation proteins"/>
    <property type="match status" value="1"/>
</dbReference>
<dbReference type="PROSITE" id="PS00474">
    <property type="entry name" value="RIBOSOMAL_L3"/>
    <property type="match status" value="1"/>
</dbReference>
<feature type="chain" id="PRO_1000052016" description="Large ribosomal subunit protein uL3">
    <location>
        <begin position="1"/>
        <end position="239"/>
    </location>
</feature>
<feature type="region of interest" description="Disordered" evidence="2">
    <location>
        <begin position="140"/>
        <end position="164"/>
    </location>
</feature>
<feature type="region of interest" description="Disordered" evidence="2">
    <location>
        <begin position="211"/>
        <end position="239"/>
    </location>
</feature>
<feature type="modified residue" description="N5-methylglutamine" evidence="1">
    <location>
        <position position="151"/>
    </location>
</feature>
<name>RL3_BRASO</name>
<organism>
    <name type="scientific">Bradyrhizobium sp. (strain ORS 278)</name>
    <dbReference type="NCBI Taxonomy" id="114615"/>
    <lineage>
        <taxon>Bacteria</taxon>
        <taxon>Pseudomonadati</taxon>
        <taxon>Pseudomonadota</taxon>
        <taxon>Alphaproteobacteria</taxon>
        <taxon>Hyphomicrobiales</taxon>
        <taxon>Nitrobacteraceae</taxon>
        <taxon>Bradyrhizobium</taxon>
    </lineage>
</organism>
<keyword id="KW-0488">Methylation</keyword>
<keyword id="KW-1185">Reference proteome</keyword>
<keyword id="KW-0687">Ribonucleoprotein</keyword>
<keyword id="KW-0689">Ribosomal protein</keyword>
<keyword id="KW-0694">RNA-binding</keyword>
<keyword id="KW-0699">rRNA-binding</keyword>